<keyword id="KW-0045">Antibiotic biosynthesis</keyword>
<keyword id="KW-0274">FAD</keyword>
<keyword id="KW-0285">Flavoprotein</keyword>
<keyword id="KW-0503">Monooxygenase</keyword>
<keyword id="KW-0521">NADP</keyword>
<keyword id="KW-0560">Oxidoreductase</keyword>
<keyword id="KW-1185">Reference proteome</keyword>
<protein>
    <recommendedName>
        <fullName evidence="4">CMP-5'-(3-aminopropyl)phosphonate hydroxylase</fullName>
        <ecNumber evidence="2">1.14.13.-</ecNumber>
    </recommendedName>
</protein>
<organism>
    <name type="scientific">Streptomyces rubellomurinus (strain ATCC 31215)</name>
    <dbReference type="NCBI Taxonomy" id="359131"/>
    <lineage>
        <taxon>Bacteria</taxon>
        <taxon>Bacillati</taxon>
        <taxon>Actinomycetota</taxon>
        <taxon>Actinomycetes</taxon>
        <taxon>Kitasatosporales</taxon>
        <taxon>Streptomycetaceae</taxon>
        <taxon>Streptomyces</taxon>
    </lineage>
</organism>
<proteinExistence type="evidence at protein level"/>
<dbReference type="EC" id="1.14.13.-" evidence="2"/>
<dbReference type="EMBL" id="DQ267750">
    <property type="protein sequence ID" value="ABB90396.1"/>
    <property type="molecule type" value="Genomic_DNA"/>
</dbReference>
<dbReference type="EMBL" id="JZKH01000051">
    <property type="protein sequence ID" value="KJS60091.1"/>
    <property type="molecule type" value="Genomic_DNA"/>
</dbReference>
<dbReference type="RefSeq" id="WP_045699994.1">
    <property type="nucleotide sequence ID" value="NZ_JZKH01000051.1"/>
</dbReference>
<dbReference type="PATRIC" id="fig|359131.3.peg.5652"/>
<dbReference type="OrthoDB" id="9768668at2"/>
<dbReference type="BioCyc" id="MetaCyc:MONOMER-18401"/>
<dbReference type="Proteomes" id="UP000033699">
    <property type="component" value="Unassembled WGS sequence"/>
</dbReference>
<dbReference type="GO" id="GO:0004497">
    <property type="term" value="F:monooxygenase activity"/>
    <property type="evidence" value="ECO:0007669"/>
    <property type="project" value="UniProtKB-KW"/>
</dbReference>
<dbReference type="GO" id="GO:0017000">
    <property type="term" value="P:antibiotic biosynthetic process"/>
    <property type="evidence" value="ECO:0007669"/>
    <property type="project" value="UniProtKB-KW"/>
</dbReference>
<dbReference type="Gene3D" id="3.50.50.60">
    <property type="entry name" value="FAD/NAD(P)-binding domain"/>
    <property type="match status" value="1"/>
</dbReference>
<dbReference type="InterPro" id="IPR036188">
    <property type="entry name" value="FAD/NAD-bd_sf"/>
</dbReference>
<dbReference type="PRINTS" id="PR00368">
    <property type="entry name" value="FADPNR"/>
</dbReference>
<dbReference type="SUPFAM" id="SSF51905">
    <property type="entry name" value="FAD/NAD(P)-binding domain"/>
    <property type="match status" value="1"/>
</dbReference>
<evidence type="ECO:0000269" key="1">
    <source>
    </source>
</evidence>
<evidence type="ECO:0000269" key="2">
    <source>
    </source>
</evidence>
<evidence type="ECO:0000303" key="3">
    <source>
    </source>
</evidence>
<evidence type="ECO:0000305" key="4"/>
<evidence type="ECO:0000305" key="5">
    <source>
    </source>
</evidence>
<evidence type="ECO:0000312" key="6">
    <source>
        <dbReference type="EMBL" id="KJS60091.1"/>
    </source>
</evidence>
<comment type="function">
    <text evidence="2">Hydroxylase involved in the biosynthesis of the phosphonate antibiotic FR-900098, a potent antimalarial agent that acts as an inhibitor of 1-deoxy-D-xylulose 5-phosphate reductoisomerase (DXR), the first enzyme in the nonmevalonate pathway for isoprenoid biosynthesis (PubMed:20142041). Catalyzes the N-hydroxylation of CMP-5'-3-aminopropylphosphonate (CMP-5'-3APn) to CMP-5'-(N-hydroxy-3-aminopropyl)phosphonate (CMP-5'-H3APn) (PubMed:20142041). Cannot use CMP-5'-N-acetyl-3-aminopropylphosphonate (CMP-5'-Ac3APn) as a substrate (PubMed:20142041).</text>
</comment>
<comment type="catalytic activity">
    <reaction evidence="2">
        <text>CMP-5'-(3-aminopropyl)phosphonate + NADPH + O2 = CMP-5'-(N-hydroxy-3-aminopropyl)phosphonate + NADP(+) + H2O</text>
        <dbReference type="Rhea" id="RHEA:78491"/>
        <dbReference type="ChEBI" id="CHEBI:15377"/>
        <dbReference type="ChEBI" id="CHEBI:15379"/>
        <dbReference type="ChEBI" id="CHEBI:57783"/>
        <dbReference type="ChEBI" id="CHEBI:58349"/>
        <dbReference type="ChEBI" id="CHEBI:229206"/>
        <dbReference type="ChEBI" id="CHEBI:229207"/>
    </reaction>
    <physiologicalReaction direction="left-to-right" evidence="2">
        <dbReference type="Rhea" id="RHEA:78492"/>
    </physiologicalReaction>
</comment>
<comment type="cofactor">
    <cofactor evidence="5">
        <name>FAD</name>
        <dbReference type="ChEBI" id="CHEBI:57692"/>
    </cofactor>
</comment>
<comment type="biophysicochemical properties">
    <kinetics>
        <KM evidence="2">15.1 uM for CMP-5'-3APn</KM>
        <text evidence="2">kcat is 5.92 min(-1) with CMP-5'-3APn as substrate.</text>
    </kinetics>
</comment>
<comment type="pathway">
    <text evidence="1 2">Antibiotic biosynthesis.</text>
</comment>
<name>FRBG_STRR3</name>
<accession>Q0ZQ42</accession>
<gene>
    <name evidence="3" type="primary">frbG</name>
    <name evidence="6" type="ORF">VM95_23225</name>
</gene>
<sequence length="437" mass="45713">MTHYATVICGGGPAGVSAVVAAAVQGRLEEFLDRGVLLVEATGRAGSGSIPHYGIRANSLGSAFLECLDGPAGSGLLAGLADSAEARELRGWADEYPPLPVVGAFLTLVGERVVDALRRHPRCDALLGHRVVEVRTGPERATVLLSGPDGELSHTGDRVLLTMGGRERTELAPDALAALVERRPGLRVLSSGEVITDPSWHPDAASPHRALGSIAVLGGAHSAWAVAAHLARLARAGWFAGPVEVTVVERRLPPIFYFSAAEARAEGYRWDEADVCGPSGRVHRFGGLRGPARELARQVMGLAAEKAPDGFGQVVLDGPWTAEALEAAVGDADLVITALGYDARLPRLLGADGRELELARPRGAVDTGRDGLPGLAAGGRAERLVMYGLGAGLVPSEETGGEPGYRGRLDGVWVYQHDIGAVILRALLANDRTEDGR</sequence>
<reference key="1">
    <citation type="journal article" date="2008" name="Chem. Biol.">
        <title>Cloning, expression, and biochemical characterization of Streptomyces rubellomurinus genes required for biosynthesis of antimalarial compound FR900098.</title>
        <authorList>
            <person name="Eliot A.C."/>
            <person name="Griffin B.M."/>
            <person name="Thomas P.M."/>
            <person name="Johannes T.W."/>
            <person name="Kelleher N.L."/>
            <person name="Zhao H."/>
            <person name="Metcalf W.W."/>
        </authorList>
    </citation>
    <scope>NUCLEOTIDE SEQUENCE [GENOMIC DNA]</scope>
    <scope>PATHWAY</scope>
    <source>
        <strain>ATCC 31215</strain>
    </source>
</reference>
<reference key="2">
    <citation type="submission" date="2015-02" db="EMBL/GenBank/DDBJ databases">
        <authorList>
            <person name="Ju K.-S."/>
            <person name="Doroghazi J.R."/>
            <person name="Metcalf W."/>
        </authorList>
    </citation>
    <scope>NUCLEOTIDE SEQUENCE [LARGE SCALE GENOMIC DNA]</scope>
    <source>
        <strain>ATCC 31215</strain>
    </source>
</reference>
<reference key="3">
    <citation type="journal article" date="2010" name="Chem. Biol.">
        <title>Deciphering the late biosynthetic steps of antimalarial compound FR-900098.</title>
        <authorList>
            <person name="Johannes T.W."/>
            <person name="DeSieno M.A."/>
            <person name="Griffin B.M."/>
            <person name="Thomas P.M."/>
            <person name="Kelleher N.L."/>
            <person name="Metcalf W.W."/>
            <person name="Zhao H."/>
        </authorList>
    </citation>
    <scope>FUNCTION</scope>
    <scope>CATALYTIC ACTIVITY</scope>
    <scope>BIOPHYSICOCHEMICAL PROPERTIES</scope>
    <scope>PATHWAY</scope>
    <source>
        <strain>ATCC 31215</strain>
    </source>
</reference>
<feature type="chain" id="PRO_0000460441" description="CMP-5'-(3-aminopropyl)phosphonate hydroxylase">
    <location>
        <begin position="1"/>
        <end position="437"/>
    </location>
</feature>